<organism>
    <name type="scientific">Oryza sativa subsp. japonica</name>
    <name type="common">Rice</name>
    <dbReference type="NCBI Taxonomy" id="39947"/>
    <lineage>
        <taxon>Eukaryota</taxon>
        <taxon>Viridiplantae</taxon>
        <taxon>Streptophyta</taxon>
        <taxon>Embryophyta</taxon>
        <taxon>Tracheophyta</taxon>
        <taxon>Spermatophyta</taxon>
        <taxon>Magnoliopsida</taxon>
        <taxon>Liliopsida</taxon>
        <taxon>Poales</taxon>
        <taxon>Poaceae</taxon>
        <taxon>BOP clade</taxon>
        <taxon>Oryzoideae</taxon>
        <taxon>Oryzeae</taxon>
        <taxon>Oryzinae</taxon>
        <taxon>Oryza</taxon>
        <taxon>Oryza sativa</taxon>
    </lineage>
</organism>
<dbReference type="EC" id="1.4.1.3" evidence="2"/>
<dbReference type="EMBL" id="AB035927">
    <property type="protein sequence ID" value="BAE48297.1"/>
    <property type="molecule type" value="mRNA"/>
</dbReference>
<dbReference type="EMBL" id="AP007203">
    <property type="protein sequence ID" value="BAD26562.1"/>
    <property type="molecule type" value="Genomic_DNA"/>
</dbReference>
<dbReference type="EMBL" id="AP008208">
    <property type="protein sequence ID" value="BAF09503.1"/>
    <property type="molecule type" value="Genomic_DNA"/>
</dbReference>
<dbReference type="EMBL" id="AP014958">
    <property type="protein sequence ID" value="BAS80054.1"/>
    <property type="molecule type" value="Genomic_DNA"/>
</dbReference>
<dbReference type="EMBL" id="CM000139">
    <property type="protein sequence ID" value="EAZ24022.1"/>
    <property type="molecule type" value="Genomic_DNA"/>
</dbReference>
<dbReference type="EMBL" id="AK103028">
    <property type="protein sequence ID" value="BAG95846.1"/>
    <property type="molecule type" value="mRNA"/>
</dbReference>
<dbReference type="RefSeq" id="XP_015622776.1">
    <property type="nucleotide sequence ID" value="XM_015767290.1"/>
</dbReference>
<dbReference type="SMR" id="Q6H3Y7"/>
<dbReference type="FunCoup" id="Q6H3Y7">
    <property type="interactions" value="1949"/>
</dbReference>
<dbReference type="STRING" id="39947.Q6H3Y7"/>
<dbReference type="PaxDb" id="39947-Q6H3Y7"/>
<dbReference type="EnsemblPlants" id="Os02t0650900-01">
    <property type="protein sequence ID" value="Os02t0650900-01"/>
    <property type="gene ID" value="Os02g0650900"/>
</dbReference>
<dbReference type="Gramene" id="Os02t0650900-01">
    <property type="protein sequence ID" value="Os02t0650900-01"/>
    <property type="gene ID" value="Os02g0650900"/>
</dbReference>
<dbReference type="KEGG" id="dosa:Os02g0650900"/>
<dbReference type="eggNOG" id="KOG2250">
    <property type="taxonomic scope" value="Eukaryota"/>
</dbReference>
<dbReference type="HOGENOM" id="CLU_025763_1_2_1"/>
<dbReference type="InParanoid" id="Q6H3Y7"/>
<dbReference type="OMA" id="WGPEKIV"/>
<dbReference type="OrthoDB" id="6718861at2759"/>
<dbReference type="Proteomes" id="UP000000763">
    <property type="component" value="Chromosome 2"/>
</dbReference>
<dbReference type="Proteomes" id="UP000007752">
    <property type="component" value="Chromosome 2"/>
</dbReference>
<dbReference type="Proteomes" id="UP000059680">
    <property type="component" value="Chromosome 2"/>
</dbReference>
<dbReference type="GO" id="GO:0005739">
    <property type="term" value="C:mitochondrion"/>
    <property type="evidence" value="ECO:0000318"/>
    <property type="project" value="GO_Central"/>
</dbReference>
<dbReference type="GO" id="GO:0004352">
    <property type="term" value="F:glutamate dehydrogenase (NAD+) activity"/>
    <property type="evidence" value="ECO:0000318"/>
    <property type="project" value="GO_Central"/>
</dbReference>
<dbReference type="GO" id="GO:0004354">
    <property type="term" value="F:glutamate dehydrogenase (NADP+) activity"/>
    <property type="evidence" value="ECO:0007669"/>
    <property type="project" value="RHEA"/>
</dbReference>
<dbReference type="GO" id="GO:0006995">
    <property type="term" value="P:cellular response to nitrogen starvation"/>
    <property type="evidence" value="ECO:0000270"/>
    <property type="project" value="UniProtKB"/>
</dbReference>
<dbReference type="GO" id="GO:0006538">
    <property type="term" value="P:glutamate catabolic process"/>
    <property type="evidence" value="ECO:0000318"/>
    <property type="project" value="GO_Central"/>
</dbReference>
<dbReference type="GO" id="GO:0010446">
    <property type="term" value="P:response to alkaline pH"/>
    <property type="evidence" value="ECO:0000270"/>
    <property type="project" value="UniProtKB"/>
</dbReference>
<dbReference type="GO" id="GO:0009651">
    <property type="term" value="P:response to salt stress"/>
    <property type="evidence" value="ECO:0000270"/>
    <property type="project" value="UniProtKB"/>
</dbReference>
<dbReference type="CDD" id="cd01076">
    <property type="entry name" value="NAD_bind_1_Glu_DH"/>
    <property type="match status" value="1"/>
</dbReference>
<dbReference type="FunFam" id="3.40.50.10860:FF:000003">
    <property type="entry name" value="Glutamate dehydrogenase"/>
    <property type="match status" value="1"/>
</dbReference>
<dbReference type="FunFam" id="3.40.50.720:FF:000212">
    <property type="entry name" value="Glutamate dehydrogenase"/>
    <property type="match status" value="1"/>
</dbReference>
<dbReference type="Gene3D" id="3.40.50.10860">
    <property type="entry name" value="Leucine Dehydrogenase, chain A, domain 1"/>
    <property type="match status" value="1"/>
</dbReference>
<dbReference type="Gene3D" id="3.40.50.720">
    <property type="entry name" value="NAD(P)-binding Rossmann-like Domain"/>
    <property type="match status" value="1"/>
</dbReference>
<dbReference type="InterPro" id="IPR046346">
    <property type="entry name" value="Aminoacid_DH-like_N_sf"/>
</dbReference>
<dbReference type="InterPro" id="IPR006095">
    <property type="entry name" value="Glu/Leu/Phe/Val/Trp_DH"/>
</dbReference>
<dbReference type="InterPro" id="IPR006096">
    <property type="entry name" value="Glu/Leu/Phe/Val/Trp_DH_C"/>
</dbReference>
<dbReference type="InterPro" id="IPR006097">
    <property type="entry name" value="Glu/Leu/Phe/Val/Trp_DH_dimer"/>
</dbReference>
<dbReference type="InterPro" id="IPR033524">
    <property type="entry name" value="Glu/Leu/Phe/Val_DH_AS"/>
</dbReference>
<dbReference type="InterPro" id="IPR014362">
    <property type="entry name" value="Glu_DH"/>
</dbReference>
<dbReference type="InterPro" id="IPR036291">
    <property type="entry name" value="NAD(P)-bd_dom_sf"/>
</dbReference>
<dbReference type="InterPro" id="IPR033922">
    <property type="entry name" value="NAD_bind_Glu_DH"/>
</dbReference>
<dbReference type="PANTHER" id="PTHR11606">
    <property type="entry name" value="GLUTAMATE DEHYDROGENASE"/>
    <property type="match status" value="1"/>
</dbReference>
<dbReference type="PANTHER" id="PTHR11606:SF24">
    <property type="entry name" value="NAD-SPECIFIC GLUTAMATE DEHYDROGENASE"/>
    <property type="match status" value="1"/>
</dbReference>
<dbReference type="Pfam" id="PF00208">
    <property type="entry name" value="ELFV_dehydrog"/>
    <property type="match status" value="1"/>
</dbReference>
<dbReference type="Pfam" id="PF02812">
    <property type="entry name" value="ELFV_dehydrog_N"/>
    <property type="match status" value="1"/>
</dbReference>
<dbReference type="PIRSF" id="PIRSF000185">
    <property type="entry name" value="Glu_DH"/>
    <property type="match status" value="1"/>
</dbReference>
<dbReference type="PRINTS" id="PR00082">
    <property type="entry name" value="GLFDHDRGNASE"/>
</dbReference>
<dbReference type="SMART" id="SM00839">
    <property type="entry name" value="ELFV_dehydrog"/>
    <property type="match status" value="1"/>
</dbReference>
<dbReference type="SUPFAM" id="SSF53223">
    <property type="entry name" value="Aminoacid dehydrogenase-like, N-terminal domain"/>
    <property type="match status" value="1"/>
</dbReference>
<dbReference type="SUPFAM" id="SSF51735">
    <property type="entry name" value="NAD(P)-binding Rossmann-fold domains"/>
    <property type="match status" value="1"/>
</dbReference>
<dbReference type="PROSITE" id="PS00074">
    <property type="entry name" value="GLFV_DEHYDROGENASE"/>
    <property type="match status" value="1"/>
</dbReference>
<comment type="catalytic activity">
    <reaction evidence="2">
        <text>L-glutamate + NAD(+) + H2O = 2-oxoglutarate + NH4(+) + NADH + H(+)</text>
        <dbReference type="Rhea" id="RHEA:15133"/>
        <dbReference type="ChEBI" id="CHEBI:15377"/>
        <dbReference type="ChEBI" id="CHEBI:15378"/>
        <dbReference type="ChEBI" id="CHEBI:16810"/>
        <dbReference type="ChEBI" id="CHEBI:28938"/>
        <dbReference type="ChEBI" id="CHEBI:29985"/>
        <dbReference type="ChEBI" id="CHEBI:57540"/>
        <dbReference type="ChEBI" id="CHEBI:57945"/>
        <dbReference type="EC" id="1.4.1.3"/>
    </reaction>
</comment>
<comment type="catalytic activity">
    <reaction evidence="2">
        <text>L-glutamate + NADP(+) + H2O = 2-oxoglutarate + NH4(+) + NADPH + H(+)</text>
        <dbReference type="Rhea" id="RHEA:11612"/>
        <dbReference type="ChEBI" id="CHEBI:15377"/>
        <dbReference type="ChEBI" id="CHEBI:15378"/>
        <dbReference type="ChEBI" id="CHEBI:16810"/>
        <dbReference type="ChEBI" id="CHEBI:28938"/>
        <dbReference type="ChEBI" id="CHEBI:29985"/>
        <dbReference type="ChEBI" id="CHEBI:57783"/>
        <dbReference type="ChEBI" id="CHEBI:58349"/>
        <dbReference type="EC" id="1.4.1.3"/>
    </reaction>
</comment>
<comment type="subcellular location">
    <subcellularLocation>
        <location evidence="1">Mitochondrion</location>
    </subcellularLocation>
</comment>
<comment type="tissue specificity">
    <text evidence="3 4">Barely expressed in leaves, spikelets and roots (PubMed:16120687). Glumes and stamens specific accumulation (PubMed:19430792).</text>
</comment>
<comment type="induction">
    <text evidence="4 5 6">Induced in shoots and roots after nitrogen (N-deprivation) and phosphorus (P-deprivation) deprivations (PubMed:19430792). Induced by alkali stress (PubMed:22655071). Up-regulated by salt stress in old leaves (PubMed:23082824).</text>
</comment>
<comment type="similarity">
    <text evidence="7">Belongs to the Glu/Leu/Phe/Val dehydrogenases family.</text>
</comment>
<reference key="1">
    <citation type="journal article" date="2005" name="Plant Cell Physiol.">
        <title>Localization of NAD-isocitrate dehydrogenase and glutamate dehydrogenase in rice roots: candidates for providing carbon skeletons to NADH-glutamate synthase.</title>
        <authorList>
            <person name="Abiko T."/>
            <person name="Obara M."/>
            <person name="Ushioda A."/>
            <person name="Hayakawa T."/>
            <person name="Hodges M."/>
            <person name="Yamaya T."/>
        </authorList>
    </citation>
    <scope>NUCLEOTIDE SEQUENCE [MRNA]</scope>
    <scope>TISSUE SPECIFICITY</scope>
    <source>
        <strain>cv. Sasanishiki</strain>
        <tissue>Root</tissue>
    </source>
</reference>
<reference key="2">
    <citation type="journal article" date="2005" name="Nature">
        <title>The map-based sequence of the rice genome.</title>
        <authorList>
            <consortium name="International rice genome sequencing project (IRGSP)"/>
        </authorList>
    </citation>
    <scope>NUCLEOTIDE SEQUENCE [LARGE SCALE GENOMIC DNA]</scope>
    <source>
        <strain>cv. Nipponbare</strain>
    </source>
</reference>
<reference key="3">
    <citation type="journal article" date="2008" name="Nucleic Acids Res.">
        <title>The rice annotation project database (RAP-DB): 2008 update.</title>
        <authorList>
            <consortium name="The rice annotation project (RAP)"/>
        </authorList>
    </citation>
    <scope>GENOME REANNOTATION</scope>
    <source>
        <strain>cv. Nipponbare</strain>
    </source>
</reference>
<reference key="4">
    <citation type="journal article" date="2013" name="Rice">
        <title>Improvement of the Oryza sativa Nipponbare reference genome using next generation sequence and optical map data.</title>
        <authorList>
            <person name="Kawahara Y."/>
            <person name="de la Bastide M."/>
            <person name="Hamilton J.P."/>
            <person name="Kanamori H."/>
            <person name="McCombie W.R."/>
            <person name="Ouyang S."/>
            <person name="Schwartz D.C."/>
            <person name="Tanaka T."/>
            <person name="Wu J."/>
            <person name="Zhou S."/>
            <person name="Childs K.L."/>
            <person name="Davidson R.M."/>
            <person name="Lin H."/>
            <person name="Quesada-Ocampo L."/>
            <person name="Vaillancourt B."/>
            <person name="Sakai H."/>
            <person name="Lee S.S."/>
            <person name="Kim J."/>
            <person name="Numa H."/>
            <person name="Itoh T."/>
            <person name="Buell C.R."/>
            <person name="Matsumoto T."/>
        </authorList>
    </citation>
    <scope>GENOME REANNOTATION</scope>
    <source>
        <strain>cv. Nipponbare</strain>
    </source>
</reference>
<reference key="5">
    <citation type="journal article" date="2005" name="PLoS Biol.">
        <title>The genomes of Oryza sativa: a history of duplications.</title>
        <authorList>
            <person name="Yu J."/>
            <person name="Wang J."/>
            <person name="Lin W."/>
            <person name="Li S."/>
            <person name="Li H."/>
            <person name="Zhou J."/>
            <person name="Ni P."/>
            <person name="Dong W."/>
            <person name="Hu S."/>
            <person name="Zeng C."/>
            <person name="Zhang J."/>
            <person name="Zhang Y."/>
            <person name="Li R."/>
            <person name="Xu Z."/>
            <person name="Li S."/>
            <person name="Li X."/>
            <person name="Zheng H."/>
            <person name="Cong L."/>
            <person name="Lin L."/>
            <person name="Yin J."/>
            <person name="Geng J."/>
            <person name="Li G."/>
            <person name="Shi J."/>
            <person name="Liu J."/>
            <person name="Lv H."/>
            <person name="Li J."/>
            <person name="Wang J."/>
            <person name="Deng Y."/>
            <person name="Ran L."/>
            <person name="Shi X."/>
            <person name="Wang X."/>
            <person name="Wu Q."/>
            <person name="Li C."/>
            <person name="Ren X."/>
            <person name="Wang J."/>
            <person name="Wang X."/>
            <person name="Li D."/>
            <person name="Liu D."/>
            <person name="Zhang X."/>
            <person name="Ji Z."/>
            <person name="Zhao W."/>
            <person name="Sun Y."/>
            <person name="Zhang Z."/>
            <person name="Bao J."/>
            <person name="Han Y."/>
            <person name="Dong L."/>
            <person name="Ji J."/>
            <person name="Chen P."/>
            <person name="Wu S."/>
            <person name="Liu J."/>
            <person name="Xiao Y."/>
            <person name="Bu D."/>
            <person name="Tan J."/>
            <person name="Yang L."/>
            <person name="Ye C."/>
            <person name="Zhang J."/>
            <person name="Xu J."/>
            <person name="Zhou Y."/>
            <person name="Yu Y."/>
            <person name="Zhang B."/>
            <person name="Zhuang S."/>
            <person name="Wei H."/>
            <person name="Liu B."/>
            <person name="Lei M."/>
            <person name="Yu H."/>
            <person name="Li Y."/>
            <person name="Xu H."/>
            <person name="Wei S."/>
            <person name="He X."/>
            <person name="Fang L."/>
            <person name="Zhang Z."/>
            <person name="Zhang Y."/>
            <person name="Huang X."/>
            <person name="Su Z."/>
            <person name="Tong W."/>
            <person name="Li J."/>
            <person name="Tong Z."/>
            <person name="Li S."/>
            <person name="Ye J."/>
            <person name="Wang L."/>
            <person name="Fang L."/>
            <person name="Lei T."/>
            <person name="Chen C.-S."/>
            <person name="Chen H.-C."/>
            <person name="Xu Z."/>
            <person name="Li H."/>
            <person name="Huang H."/>
            <person name="Zhang F."/>
            <person name="Xu H."/>
            <person name="Li N."/>
            <person name="Zhao C."/>
            <person name="Li S."/>
            <person name="Dong L."/>
            <person name="Huang Y."/>
            <person name="Li L."/>
            <person name="Xi Y."/>
            <person name="Qi Q."/>
            <person name="Li W."/>
            <person name="Zhang B."/>
            <person name="Hu W."/>
            <person name="Zhang Y."/>
            <person name="Tian X."/>
            <person name="Jiao Y."/>
            <person name="Liang X."/>
            <person name="Jin J."/>
            <person name="Gao L."/>
            <person name="Zheng W."/>
            <person name="Hao B."/>
            <person name="Liu S.-M."/>
            <person name="Wang W."/>
            <person name="Yuan L."/>
            <person name="Cao M."/>
            <person name="McDermott J."/>
            <person name="Samudrala R."/>
            <person name="Wang J."/>
            <person name="Wong G.K.-S."/>
            <person name="Yang H."/>
        </authorList>
    </citation>
    <scope>NUCLEOTIDE SEQUENCE [LARGE SCALE GENOMIC DNA]</scope>
    <source>
        <strain>cv. Nipponbare</strain>
    </source>
</reference>
<reference key="6">
    <citation type="journal article" date="2003" name="Science">
        <title>Collection, mapping, and annotation of over 28,000 cDNA clones from japonica rice.</title>
        <authorList>
            <consortium name="The rice full-length cDNA consortium"/>
        </authorList>
    </citation>
    <scope>NUCLEOTIDE SEQUENCE [LARGE SCALE MRNA]</scope>
    <source>
        <strain>cv. Nipponbare</strain>
    </source>
</reference>
<reference key="7">
    <citation type="journal article" date="2009" name="Plant Cell Rep.">
        <title>Molecular analyses of the rice glutamate dehydrogenase gene family and their response to nitrogen and phosphorous deprivation.</title>
        <authorList>
            <person name="Qiu X."/>
            <person name="Xie W."/>
            <person name="Lian X."/>
            <person name="Zhang Q."/>
        </authorList>
    </citation>
    <scope>TISSUE SPECIFICITY</scope>
    <scope>INDUCTION BY NITROGEN AND PHOSPHORUS DEPRIVATION</scope>
</reference>
<reference key="8">
    <citation type="journal article" date="2012" name="BMC Plant Biol.">
        <title>Effects of salt stress on ion balance and nitrogen metabolism of old and young leaves in rice (Oryza sativa L.).</title>
        <authorList>
            <person name="Wang H."/>
            <person name="Zhang M."/>
            <person name="Guo R."/>
            <person name="Shi D."/>
            <person name="Liu B."/>
            <person name="Lin X."/>
            <person name="Yang C."/>
        </authorList>
    </citation>
    <scope>INDUCTION BY SALT STRESS</scope>
</reference>
<reference key="9">
    <citation type="journal article" date="2012" name="PLoS ONE">
        <title>Comparison of ion balance and nitrogen metabolism in old and young leaves of alkali-stressed rice plants.</title>
        <authorList>
            <person name="Wang H."/>
            <person name="Wu Z."/>
            <person name="Han J."/>
            <person name="Zheng W."/>
            <person name="Yang C."/>
        </authorList>
    </citation>
    <scope>INDUCTION BY ALKALI STRESS</scope>
</reference>
<name>DHE3_ORYSJ</name>
<gene>
    <name type="primary">GDH3</name>
    <name evidence="7" type="ordered locus">LOC_Os02g43470</name>
    <name evidence="9" type="ordered locus">Os02g0650900</name>
    <name evidence="11" type="ORF">OsJ_07745</name>
    <name evidence="8" type="ORF">OSJNBb0012J10.18</name>
    <name evidence="10" type="ORF">OSNPB_020650900</name>
</gene>
<sequence length="411" mass="44454">MNALAATSRNFRQAARLLGLDSKLQKSLLIPLREIKVECTIPKDDGTLATFVGFRVQHDNSRGPMKGGIRYHPEVDPDEVNALAQLMTWKTAVAAVPYGGAKGGIGCTPGELSRSELERLTRVFTQKIHDLIGINTDVPAPDMGTNAQTMAWILDEYSKFHGHSPAVVTGKPIDLGGSLGRDAATGRGVMYATEALLTEYSESISGSTFVIQGLGNVGSWAAKLIHQKGGKIVAVGDVTGAIRNKSGIDIPALLKHRSEGGSLEDFYGAEVMDAAELLVHECDVLVPCALGGVLNRENAAEVKARFIIEGANHPTDTEADEILAKKGVIVLPDIYANSGGVVVSYFEWVQNIQGFMWDEEKVNRELQKYMKNAFQNIKDMCKSQNCNLRMGAFTLGVNRVAKATLLRGWEA</sequence>
<protein>
    <recommendedName>
        <fullName evidence="7">Glutamate dehydrogenase 3, mitochondrial</fullName>
        <shortName>OsGDH3</shortName>
        <ecNumber evidence="2">1.4.1.3</ecNumber>
    </recommendedName>
</protein>
<accession>Q6H3Y7</accession>
<proteinExistence type="evidence at transcript level"/>
<keyword id="KW-0496">Mitochondrion</keyword>
<keyword id="KW-0520">NAD</keyword>
<keyword id="KW-0521">NADP</keyword>
<keyword id="KW-0560">Oxidoreductase</keyword>
<keyword id="KW-1185">Reference proteome</keyword>
<keyword id="KW-0809">Transit peptide</keyword>
<evidence type="ECO:0000255" key="1"/>
<evidence type="ECO:0000255" key="2">
    <source>
        <dbReference type="PROSITE-ProRule" id="PRU10011"/>
    </source>
</evidence>
<evidence type="ECO:0000269" key="3">
    <source>
    </source>
</evidence>
<evidence type="ECO:0000269" key="4">
    <source>
    </source>
</evidence>
<evidence type="ECO:0000269" key="5">
    <source>
    </source>
</evidence>
<evidence type="ECO:0000269" key="6">
    <source>
    </source>
</evidence>
<evidence type="ECO:0000305" key="7"/>
<evidence type="ECO:0000312" key="8">
    <source>
        <dbReference type="EMBL" id="BAD26562.1"/>
    </source>
</evidence>
<evidence type="ECO:0000312" key="9">
    <source>
        <dbReference type="EMBL" id="BAF09503.1"/>
    </source>
</evidence>
<evidence type="ECO:0000312" key="10">
    <source>
        <dbReference type="EMBL" id="BAS80054.1"/>
    </source>
</evidence>
<evidence type="ECO:0000312" key="11">
    <source>
        <dbReference type="EMBL" id="EAZ24022.1"/>
    </source>
</evidence>
<feature type="transit peptide" description="Mitochondrion" evidence="1">
    <location>
        <begin position="1"/>
        <end position="18"/>
    </location>
</feature>
<feature type="chain" id="PRO_0000437581" description="Glutamate dehydrogenase 3, mitochondrial">
    <location>
        <begin position="19"/>
        <end position="411"/>
    </location>
</feature>
<feature type="active site" evidence="2">
    <location>
        <position position="102"/>
    </location>
</feature>